<reference key="1">
    <citation type="journal article" date="2003" name="Genome Res.">
        <title>Comparative complete genome sequence analysis of the amino acid replacements responsible for the thermostability of Corynebacterium efficiens.</title>
        <authorList>
            <person name="Nishio Y."/>
            <person name="Nakamura Y."/>
            <person name="Kawarabayasi Y."/>
            <person name="Usuda Y."/>
            <person name="Kimura E."/>
            <person name="Sugimoto S."/>
            <person name="Matsui K."/>
            <person name="Yamagishi A."/>
            <person name="Kikuchi H."/>
            <person name="Ikeo K."/>
            <person name="Gojobori T."/>
        </authorList>
    </citation>
    <scope>NUCLEOTIDE SEQUENCE [LARGE SCALE GENOMIC DNA]</scope>
    <source>
        <strain>DSM 44549 / YS-314 / AJ 12310 / JCM 11189 / NBRC 100395</strain>
    </source>
</reference>
<keyword id="KW-0520">NAD</keyword>
<keyword id="KW-0560">Oxidoreductase</keyword>
<keyword id="KW-1185">Reference proteome</keyword>
<keyword id="KW-0816">Tricarboxylic acid cycle</keyword>
<proteinExistence type="inferred from homology"/>
<name>MDH_COREF</name>
<sequence>MNSPKKITVTGAAGQIAYSLLWRIANGEVYGADTPVELNLLEIPDALGGAEGVAMELSDSAFPLLHNINITADLNEAFDGANAAFLVGAKPRGKGEERAALLSNNGKIFGPQGKAINDHAAQDIRVLVVGNPANTNALIAMSNAPDVPQSRFNAMMRLDHNRAISQLATKTGRLSSEFQDVVVWGNHSAAQFPDITYATVGGEKVSDLVDHDWYVNEFIPRVAKRGAEIIEVRGKSSAASAASSAVDHMRDWIQGTETWASAAIPSTGAYGIPEGIILGLPTVSRNGEWEVVEGLEINDFQRARIDANVEELQGEREAVKDLL</sequence>
<organism>
    <name type="scientific">Corynebacterium efficiens (strain DSM 44549 / YS-314 / AJ 12310 / JCM 11189 / NBRC 100395)</name>
    <dbReference type="NCBI Taxonomy" id="196164"/>
    <lineage>
        <taxon>Bacteria</taxon>
        <taxon>Bacillati</taxon>
        <taxon>Actinomycetota</taxon>
        <taxon>Actinomycetes</taxon>
        <taxon>Mycobacteriales</taxon>
        <taxon>Corynebacteriaceae</taxon>
        <taxon>Corynebacterium</taxon>
    </lineage>
</organism>
<feature type="chain" id="PRO_0000113363" description="Malate dehydrogenase">
    <location>
        <begin position="1"/>
        <end position="323"/>
    </location>
</feature>
<feature type="active site" description="Proton acceptor" evidence="1">
    <location>
        <position position="187"/>
    </location>
</feature>
<feature type="binding site" evidence="1">
    <location>
        <begin position="11"/>
        <end position="17"/>
    </location>
    <ligand>
        <name>NAD(+)</name>
        <dbReference type="ChEBI" id="CHEBI:57540"/>
    </ligand>
</feature>
<feature type="binding site" evidence="1">
    <location>
        <position position="92"/>
    </location>
    <ligand>
        <name>substrate</name>
    </ligand>
</feature>
<feature type="binding site" evidence="1">
    <location>
        <position position="98"/>
    </location>
    <ligand>
        <name>substrate</name>
    </ligand>
</feature>
<feature type="binding site" evidence="1">
    <location>
        <position position="105"/>
    </location>
    <ligand>
        <name>NAD(+)</name>
        <dbReference type="ChEBI" id="CHEBI:57540"/>
    </ligand>
</feature>
<feature type="binding site" evidence="1">
    <location>
        <position position="112"/>
    </location>
    <ligand>
        <name>NAD(+)</name>
        <dbReference type="ChEBI" id="CHEBI:57540"/>
    </ligand>
</feature>
<feature type="binding site" evidence="1">
    <location>
        <begin position="129"/>
        <end position="131"/>
    </location>
    <ligand>
        <name>NAD(+)</name>
        <dbReference type="ChEBI" id="CHEBI:57540"/>
    </ligand>
</feature>
<feature type="binding site" evidence="1">
    <location>
        <position position="131"/>
    </location>
    <ligand>
        <name>substrate</name>
    </ligand>
</feature>
<feature type="binding site" evidence="1">
    <location>
        <position position="162"/>
    </location>
    <ligand>
        <name>substrate</name>
    </ligand>
</feature>
<dbReference type="EC" id="1.1.1.37" evidence="1"/>
<dbReference type="EMBL" id="BA000035">
    <property type="protein sequence ID" value="BAC19095.1"/>
    <property type="molecule type" value="Genomic_DNA"/>
</dbReference>
<dbReference type="RefSeq" id="WP_006768289.1">
    <property type="nucleotide sequence ID" value="NC_004369.1"/>
</dbReference>
<dbReference type="SMR" id="Q8FN62"/>
<dbReference type="STRING" id="196164.gene:10742716"/>
<dbReference type="KEGG" id="cef:CE2285"/>
<dbReference type="eggNOG" id="COG0039">
    <property type="taxonomic scope" value="Bacteria"/>
</dbReference>
<dbReference type="HOGENOM" id="CLU_040727_2_0_11"/>
<dbReference type="OrthoDB" id="9802969at2"/>
<dbReference type="Proteomes" id="UP000001409">
    <property type="component" value="Chromosome"/>
</dbReference>
<dbReference type="GO" id="GO:0030060">
    <property type="term" value="F:L-malate dehydrogenase (NAD+) activity"/>
    <property type="evidence" value="ECO:0007669"/>
    <property type="project" value="UniProtKB-UniRule"/>
</dbReference>
<dbReference type="GO" id="GO:0006108">
    <property type="term" value="P:malate metabolic process"/>
    <property type="evidence" value="ECO:0007669"/>
    <property type="project" value="InterPro"/>
</dbReference>
<dbReference type="GO" id="GO:0006099">
    <property type="term" value="P:tricarboxylic acid cycle"/>
    <property type="evidence" value="ECO:0007669"/>
    <property type="project" value="UniProtKB-UniRule"/>
</dbReference>
<dbReference type="CDD" id="cd01338">
    <property type="entry name" value="MDH_chloroplast-like"/>
    <property type="match status" value="1"/>
</dbReference>
<dbReference type="FunFam" id="3.40.50.720:FF:000010">
    <property type="entry name" value="Malate dehydrogenase"/>
    <property type="match status" value="1"/>
</dbReference>
<dbReference type="FunFam" id="3.90.110.10:FF:000002">
    <property type="entry name" value="Malate dehydrogenase"/>
    <property type="match status" value="1"/>
</dbReference>
<dbReference type="Gene3D" id="3.90.110.10">
    <property type="entry name" value="Lactate dehydrogenase/glycoside hydrolase, family 4, C-terminal"/>
    <property type="match status" value="1"/>
</dbReference>
<dbReference type="Gene3D" id="3.40.50.720">
    <property type="entry name" value="NAD(P)-binding Rossmann-like Domain"/>
    <property type="match status" value="1"/>
</dbReference>
<dbReference type="HAMAP" id="MF_01517">
    <property type="entry name" value="Malate_dehydrog_2"/>
    <property type="match status" value="1"/>
</dbReference>
<dbReference type="InterPro" id="IPR001557">
    <property type="entry name" value="L-lactate/malate_DH"/>
</dbReference>
<dbReference type="InterPro" id="IPR022383">
    <property type="entry name" value="Lactate/malate_DH_C"/>
</dbReference>
<dbReference type="InterPro" id="IPR001236">
    <property type="entry name" value="Lactate/malate_DH_N"/>
</dbReference>
<dbReference type="InterPro" id="IPR015955">
    <property type="entry name" value="Lactate_DH/Glyco_Ohase_4_C"/>
</dbReference>
<dbReference type="InterPro" id="IPR010945">
    <property type="entry name" value="Malate_DH_type2"/>
</dbReference>
<dbReference type="InterPro" id="IPR036291">
    <property type="entry name" value="NAD(P)-bd_dom_sf"/>
</dbReference>
<dbReference type="NCBIfam" id="TIGR01759">
    <property type="entry name" value="MalateDH-SF1"/>
    <property type="match status" value="1"/>
</dbReference>
<dbReference type="NCBIfam" id="NF003916">
    <property type="entry name" value="PRK05442.1"/>
    <property type="match status" value="1"/>
</dbReference>
<dbReference type="PANTHER" id="PTHR23382">
    <property type="entry name" value="MALATE DEHYDROGENASE"/>
    <property type="match status" value="1"/>
</dbReference>
<dbReference type="Pfam" id="PF02866">
    <property type="entry name" value="Ldh_1_C"/>
    <property type="match status" value="1"/>
</dbReference>
<dbReference type="Pfam" id="PF00056">
    <property type="entry name" value="Ldh_1_N"/>
    <property type="match status" value="1"/>
</dbReference>
<dbReference type="PIRSF" id="PIRSF000102">
    <property type="entry name" value="Lac_mal_DH"/>
    <property type="match status" value="1"/>
</dbReference>
<dbReference type="SUPFAM" id="SSF56327">
    <property type="entry name" value="LDH C-terminal domain-like"/>
    <property type="match status" value="1"/>
</dbReference>
<dbReference type="SUPFAM" id="SSF51735">
    <property type="entry name" value="NAD(P)-binding Rossmann-fold domains"/>
    <property type="match status" value="1"/>
</dbReference>
<accession>Q8FN62</accession>
<gene>
    <name evidence="1" type="primary">mdh</name>
    <name type="ordered locus">CE2285</name>
</gene>
<comment type="function">
    <text evidence="1">Catalyzes the reversible oxidation of malate to oxaloacetate.</text>
</comment>
<comment type="catalytic activity">
    <reaction evidence="1">
        <text>(S)-malate + NAD(+) = oxaloacetate + NADH + H(+)</text>
        <dbReference type="Rhea" id="RHEA:21432"/>
        <dbReference type="ChEBI" id="CHEBI:15378"/>
        <dbReference type="ChEBI" id="CHEBI:15589"/>
        <dbReference type="ChEBI" id="CHEBI:16452"/>
        <dbReference type="ChEBI" id="CHEBI:57540"/>
        <dbReference type="ChEBI" id="CHEBI:57945"/>
        <dbReference type="EC" id="1.1.1.37"/>
    </reaction>
</comment>
<comment type="similarity">
    <text evidence="1">Belongs to the LDH/MDH superfamily. MDH type 2 family.</text>
</comment>
<protein>
    <recommendedName>
        <fullName evidence="1">Malate dehydrogenase</fullName>
        <ecNumber evidence="1">1.1.1.37</ecNumber>
    </recommendedName>
</protein>
<evidence type="ECO:0000255" key="1">
    <source>
        <dbReference type="HAMAP-Rule" id="MF_01517"/>
    </source>
</evidence>